<gene>
    <name evidence="5" type="primary">BMERB1</name>
    <name evidence="5" type="synonym">C16orf45</name>
</gene>
<dbReference type="EMBL" id="AK057180">
    <property type="protein sequence ID" value="BAB71376.1"/>
    <property type="molecule type" value="mRNA"/>
</dbReference>
<dbReference type="EMBL" id="U95740">
    <property type="protein sequence ID" value="AAC31663.1"/>
    <property type="status" value="ALT_SEQ"/>
    <property type="molecule type" value="Genomic_DNA"/>
</dbReference>
<dbReference type="EMBL" id="BC008967">
    <property type="protein sequence ID" value="AAH08967.2"/>
    <property type="molecule type" value="mRNA"/>
</dbReference>
<dbReference type="EMBL" id="BC023603">
    <property type="protein sequence ID" value="AAH23603.2"/>
    <property type="molecule type" value="mRNA"/>
</dbReference>
<dbReference type="CCDS" id="CCDS10561.1">
    <molecule id="Q96MC5-1"/>
</dbReference>
<dbReference type="CCDS" id="CCDS45422.1">
    <molecule id="Q96MC5-2"/>
</dbReference>
<dbReference type="RefSeq" id="NP_001135941.1">
    <molecule id="Q96MC5-2"/>
    <property type="nucleotide sequence ID" value="NM_001142469.2"/>
</dbReference>
<dbReference type="RefSeq" id="NP_149978.1">
    <molecule id="Q96MC5-1"/>
    <property type="nucleotide sequence ID" value="NM_033201.3"/>
</dbReference>
<dbReference type="SMR" id="Q96MC5"/>
<dbReference type="BioGRID" id="124644">
    <property type="interactions" value="37"/>
</dbReference>
<dbReference type="FunCoup" id="Q96MC5">
    <property type="interactions" value="157"/>
</dbReference>
<dbReference type="IntAct" id="Q96MC5">
    <property type="interactions" value="25"/>
</dbReference>
<dbReference type="STRING" id="9606.ENSP00000300006"/>
<dbReference type="iPTMnet" id="Q96MC5"/>
<dbReference type="PhosphoSitePlus" id="Q96MC5"/>
<dbReference type="SwissPalm" id="Q96MC5"/>
<dbReference type="BioMuta" id="C16orf45"/>
<dbReference type="DMDM" id="68565261"/>
<dbReference type="jPOST" id="Q96MC5"/>
<dbReference type="MassIVE" id="Q96MC5"/>
<dbReference type="PaxDb" id="9606-ENSP00000300006"/>
<dbReference type="PeptideAtlas" id="Q96MC5"/>
<dbReference type="ProteomicsDB" id="77332">
    <molecule id="Q96MC5-1"/>
</dbReference>
<dbReference type="Antibodypedia" id="51073">
    <property type="antibodies" value="71 antibodies from 19 providers"/>
</dbReference>
<dbReference type="DNASU" id="89927"/>
<dbReference type="Ensembl" id="ENST00000300006.9">
    <molecule id="Q96MC5-1"/>
    <property type="protein sequence ID" value="ENSP00000300006.4"/>
    <property type="gene ID" value="ENSG00000166780.11"/>
</dbReference>
<dbReference type="Ensembl" id="ENST00000452191.6">
    <molecule id="Q96MC5-2"/>
    <property type="protein sequence ID" value="ENSP00000408976.2"/>
    <property type="gene ID" value="ENSG00000166780.11"/>
</dbReference>
<dbReference type="Ensembl" id="ENST00000610499.2">
    <molecule id="Q96MC5-2"/>
    <property type="protein sequence ID" value="ENSP00000477880.1"/>
    <property type="gene ID" value="ENSG00000278823.4"/>
</dbReference>
<dbReference type="Ensembl" id="ENST00000615273.4">
    <molecule id="Q96MC5-1"/>
    <property type="protein sequence ID" value="ENSP00000483858.1"/>
    <property type="gene ID" value="ENSG00000278823.4"/>
</dbReference>
<dbReference type="GeneID" id="89927"/>
<dbReference type="KEGG" id="hsa:89927"/>
<dbReference type="MANE-Select" id="ENST00000300006.9">
    <property type="protein sequence ID" value="ENSP00000300006.4"/>
    <property type="RefSeq nucleotide sequence ID" value="NM_033201.3"/>
    <property type="RefSeq protein sequence ID" value="NP_149978.1"/>
</dbReference>
<dbReference type="UCSC" id="uc002ddo.4">
    <molecule id="Q96MC5-1"/>
    <property type="organism name" value="human"/>
</dbReference>
<dbReference type="AGR" id="HGNC:19213"/>
<dbReference type="CTD" id="89927"/>
<dbReference type="DisGeNET" id="89927"/>
<dbReference type="GeneCards" id="BMERB1"/>
<dbReference type="HGNC" id="HGNC:19213">
    <property type="gene designation" value="BMERB1"/>
</dbReference>
<dbReference type="HPA" id="ENSG00000166780">
    <property type="expression patterns" value="Tissue enhanced (brain)"/>
</dbReference>
<dbReference type="neXtProt" id="NX_Q96MC5"/>
<dbReference type="OpenTargets" id="ENSG00000166780"/>
<dbReference type="PharmGKB" id="PA134973206"/>
<dbReference type="VEuPathDB" id="HostDB:ENSG00000166780"/>
<dbReference type="eggNOG" id="ENOG502RC9C">
    <property type="taxonomic scope" value="Eukaryota"/>
</dbReference>
<dbReference type="GeneTree" id="ENSGT00440000038745"/>
<dbReference type="HOGENOM" id="CLU_123952_0_0_1"/>
<dbReference type="InParanoid" id="Q96MC5"/>
<dbReference type="OMA" id="ATQCSIM"/>
<dbReference type="OrthoDB" id="10048027at2759"/>
<dbReference type="PAN-GO" id="Q96MC5">
    <property type="GO annotations" value="2 GO annotations based on evolutionary models"/>
</dbReference>
<dbReference type="PhylomeDB" id="Q96MC5"/>
<dbReference type="TreeFam" id="TF331543"/>
<dbReference type="PathwayCommons" id="Q96MC5"/>
<dbReference type="SignaLink" id="Q96MC5"/>
<dbReference type="BioGRID-ORCS" id="89927">
    <property type="hits" value="15 hits in 1117 CRISPR screens"/>
</dbReference>
<dbReference type="ChiTaRS" id="C16orf45">
    <property type="organism name" value="human"/>
</dbReference>
<dbReference type="GenomeRNAi" id="89927"/>
<dbReference type="Pharos" id="Q96MC5">
    <property type="development level" value="Tbio"/>
</dbReference>
<dbReference type="PRO" id="PR:Q96MC5"/>
<dbReference type="Proteomes" id="UP000005640">
    <property type="component" value="Chromosome 16"/>
</dbReference>
<dbReference type="RNAct" id="Q96MC5">
    <property type="molecule type" value="protein"/>
</dbReference>
<dbReference type="Bgee" id="ENSG00000166780">
    <property type="expression patterns" value="Expressed in superior frontal gyrus and 104 other cell types or tissues"/>
</dbReference>
<dbReference type="ExpressionAtlas" id="Q96MC5">
    <property type="expression patterns" value="baseline and differential"/>
</dbReference>
<dbReference type="GO" id="GO:0015630">
    <property type="term" value="C:microtubule cytoskeleton"/>
    <property type="evidence" value="ECO:0000318"/>
    <property type="project" value="GO_Central"/>
</dbReference>
<dbReference type="GO" id="GO:0021814">
    <property type="term" value="P:cell motility involved in cerebral cortex radial glia guided migration"/>
    <property type="evidence" value="ECO:0007669"/>
    <property type="project" value="Ensembl"/>
</dbReference>
<dbReference type="GO" id="GO:0007019">
    <property type="term" value="P:microtubule depolymerization"/>
    <property type="evidence" value="ECO:0007669"/>
    <property type="project" value="Ensembl"/>
</dbReference>
<dbReference type="GO" id="GO:0021822">
    <property type="term" value="P:negative regulation of cell motility involved in cerebral cortex radial glia guided migration"/>
    <property type="evidence" value="ECO:0007669"/>
    <property type="project" value="Ensembl"/>
</dbReference>
<dbReference type="GO" id="GO:0007026">
    <property type="term" value="P:negative regulation of microtubule depolymerization"/>
    <property type="evidence" value="ECO:0000318"/>
    <property type="project" value="GO_Central"/>
</dbReference>
<dbReference type="InterPro" id="IPR022735">
    <property type="entry name" value="bMERB_dom"/>
</dbReference>
<dbReference type="InterPro" id="IPR040127">
    <property type="entry name" value="C16orf45-like"/>
</dbReference>
<dbReference type="PANTHER" id="PTHR22704:SF1">
    <property type="entry name" value="BMERB DOMAIN-CONTAINING PROTEIN 1"/>
    <property type="match status" value="1"/>
</dbReference>
<dbReference type="PANTHER" id="PTHR22704">
    <property type="entry name" value="BMERB DOMAIN-CONTAINING PROTEIN 1-RELATED"/>
    <property type="match status" value="1"/>
</dbReference>
<dbReference type="Pfam" id="PF12130">
    <property type="entry name" value="bMERB_dom"/>
    <property type="match status" value="1"/>
</dbReference>
<dbReference type="SMART" id="SM01203">
    <property type="entry name" value="DUF3585"/>
    <property type="match status" value="1"/>
</dbReference>
<dbReference type="PROSITE" id="PS51848">
    <property type="entry name" value="BMERB"/>
    <property type="match status" value="1"/>
</dbReference>
<evidence type="ECO:0000255" key="1">
    <source>
        <dbReference type="PROSITE-ProRule" id="PRU01195"/>
    </source>
</evidence>
<evidence type="ECO:0000256" key="2">
    <source>
        <dbReference type="SAM" id="MobiDB-lite"/>
    </source>
</evidence>
<evidence type="ECO:0000303" key="3">
    <source>
    </source>
</evidence>
<evidence type="ECO:0000305" key="4"/>
<evidence type="ECO:0000312" key="5">
    <source>
        <dbReference type="HGNC" id="HGNC:19213"/>
    </source>
</evidence>
<proteinExistence type="evidence at protein level"/>
<comment type="interaction">
    <interactant intactId="EBI-718468">
        <id>Q96MC5</id>
    </interactant>
    <interactant intactId="EBI-948476">
        <id>Q8WZA2</id>
        <label>RAPGEF4</label>
    </interactant>
    <organismsDiffer>false</organismsDiffer>
    <experiments>4</experiments>
</comment>
<comment type="interaction">
    <interactant intactId="EBI-718468">
        <id>Q96MC5</id>
    </interactant>
    <interactant intactId="EBI-722877">
        <id>Q99081</id>
        <label>TCF12</label>
    </interactant>
    <organismsDiffer>false</organismsDiffer>
    <experiments>3</experiments>
</comment>
<comment type="alternative products">
    <event type="alternative splicing"/>
    <isoform>
        <id>Q96MC5-1</id>
        <name>1</name>
        <sequence type="displayed"/>
    </isoform>
    <isoform>
        <id>Q96MC5-2</id>
        <name>2</name>
        <sequence type="described" ref="VSP_047232"/>
    </isoform>
</comment>
<comment type="sequence caution" evidence="4">
    <conflict type="erroneous gene model prediction">
        <sequence resource="EMBL-CDS" id="AAC31663"/>
    </conflict>
</comment>
<sequence>MELKQSLSTHLEAEKPLRRYGAVEETAWKTERLGRNQLDIISMAETTMMPEEIELEMAKIQRLREVLVRRESELRFMMDDIQLCKDIMDLKQELQNLVAIPEKEKTKLQKQREDELIQKIHKLVQKRDFLVDDAEVERLREQEEDKEMADFLRIKLKPLDKVTKSPASSRAEKKAEPPPSKPTVAKTGLALIKDCCGATQCNIM</sequence>
<protein>
    <recommendedName>
        <fullName evidence="4">bMERB domain-containing protein 1</fullName>
    </recommendedName>
</protein>
<keyword id="KW-0025">Alternative splicing</keyword>
<keyword id="KW-1267">Proteomics identification</keyword>
<keyword id="KW-1185">Reference proteome</keyword>
<feature type="chain" id="PRO_0000079281" description="bMERB domain-containing protein 1">
    <location>
        <begin position="1"/>
        <end position="204"/>
    </location>
</feature>
<feature type="domain" description="bMERB" evidence="1">
    <location>
        <begin position="3"/>
        <end position="150"/>
    </location>
</feature>
<feature type="region of interest" description="Disordered" evidence="2">
    <location>
        <begin position="162"/>
        <end position="187"/>
    </location>
</feature>
<feature type="splice variant" id="VSP_047232" description="In isoform 2." evidence="3">
    <original>MELKQSLSTHLEAEKPLRRYGAVEETAWKTERLGRN</original>
    <variation>MWGDLTETGCMGRRSAKKD</variation>
    <location>
        <begin position="1"/>
        <end position="36"/>
    </location>
</feature>
<accession>Q96MC5</accession>
<accession>O00223</accession>
<accession>O75769</accession>
<accession>Q8IZ36</accession>
<accession>Q96H25</accession>
<organism>
    <name type="scientific">Homo sapiens</name>
    <name type="common">Human</name>
    <dbReference type="NCBI Taxonomy" id="9606"/>
    <lineage>
        <taxon>Eukaryota</taxon>
        <taxon>Metazoa</taxon>
        <taxon>Chordata</taxon>
        <taxon>Craniata</taxon>
        <taxon>Vertebrata</taxon>
        <taxon>Euteleostomi</taxon>
        <taxon>Mammalia</taxon>
        <taxon>Eutheria</taxon>
        <taxon>Euarchontoglires</taxon>
        <taxon>Primates</taxon>
        <taxon>Haplorrhini</taxon>
        <taxon>Catarrhini</taxon>
        <taxon>Hominidae</taxon>
        <taxon>Homo</taxon>
    </lineage>
</organism>
<name>MERB1_HUMAN</name>
<reference key="1">
    <citation type="journal article" date="2004" name="Nat. Genet.">
        <title>Complete sequencing and characterization of 21,243 full-length human cDNAs.</title>
        <authorList>
            <person name="Ota T."/>
            <person name="Suzuki Y."/>
            <person name="Nishikawa T."/>
            <person name="Otsuki T."/>
            <person name="Sugiyama T."/>
            <person name="Irie R."/>
            <person name="Wakamatsu A."/>
            <person name="Hayashi K."/>
            <person name="Sato H."/>
            <person name="Nagai K."/>
            <person name="Kimura K."/>
            <person name="Makita H."/>
            <person name="Sekine M."/>
            <person name="Obayashi M."/>
            <person name="Nishi T."/>
            <person name="Shibahara T."/>
            <person name="Tanaka T."/>
            <person name="Ishii S."/>
            <person name="Yamamoto J."/>
            <person name="Saito K."/>
            <person name="Kawai Y."/>
            <person name="Isono Y."/>
            <person name="Nakamura Y."/>
            <person name="Nagahari K."/>
            <person name="Murakami K."/>
            <person name="Yasuda T."/>
            <person name="Iwayanagi T."/>
            <person name="Wagatsuma M."/>
            <person name="Shiratori A."/>
            <person name="Sudo H."/>
            <person name="Hosoiri T."/>
            <person name="Kaku Y."/>
            <person name="Kodaira H."/>
            <person name="Kondo H."/>
            <person name="Sugawara M."/>
            <person name="Takahashi M."/>
            <person name="Kanda K."/>
            <person name="Yokoi T."/>
            <person name="Furuya T."/>
            <person name="Kikkawa E."/>
            <person name="Omura Y."/>
            <person name="Abe K."/>
            <person name="Kamihara K."/>
            <person name="Katsuta N."/>
            <person name="Sato K."/>
            <person name="Tanikawa M."/>
            <person name="Yamazaki M."/>
            <person name="Ninomiya K."/>
            <person name="Ishibashi T."/>
            <person name="Yamashita H."/>
            <person name="Murakawa K."/>
            <person name="Fujimori K."/>
            <person name="Tanai H."/>
            <person name="Kimata M."/>
            <person name="Watanabe M."/>
            <person name="Hiraoka S."/>
            <person name="Chiba Y."/>
            <person name="Ishida S."/>
            <person name="Ono Y."/>
            <person name="Takiguchi S."/>
            <person name="Watanabe S."/>
            <person name="Yosida M."/>
            <person name="Hotuta T."/>
            <person name="Kusano J."/>
            <person name="Kanehori K."/>
            <person name="Takahashi-Fujii A."/>
            <person name="Hara H."/>
            <person name="Tanase T.-O."/>
            <person name="Nomura Y."/>
            <person name="Togiya S."/>
            <person name="Komai F."/>
            <person name="Hara R."/>
            <person name="Takeuchi K."/>
            <person name="Arita M."/>
            <person name="Imose N."/>
            <person name="Musashino K."/>
            <person name="Yuuki H."/>
            <person name="Oshima A."/>
            <person name="Sasaki N."/>
            <person name="Aotsuka S."/>
            <person name="Yoshikawa Y."/>
            <person name="Matsunawa H."/>
            <person name="Ichihara T."/>
            <person name="Shiohata N."/>
            <person name="Sano S."/>
            <person name="Moriya S."/>
            <person name="Momiyama H."/>
            <person name="Satoh N."/>
            <person name="Takami S."/>
            <person name="Terashima Y."/>
            <person name="Suzuki O."/>
            <person name="Nakagawa S."/>
            <person name="Senoh A."/>
            <person name="Mizoguchi H."/>
            <person name="Goto Y."/>
            <person name="Shimizu F."/>
            <person name="Wakebe H."/>
            <person name="Hishigaki H."/>
            <person name="Watanabe T."/>
            <person name="Sugiyama A."/>
            <person name="Takemoto M."/>
            <person name="Kawakami B."/>
            <person name="Yamazaki M."/>
            <person name="Watanabe K."/>
            <person name="Kumagai A."/>
            <person name="Itakura S."/>
            <person name="Fukuzumi Y."/>
            <person name="Fujimori Y."/>
            <person name="Komiyama M."/>
            <person name="Tashiro H."/>
            <person name="Tanigami A."/>
            <person name="Fujiwara T."/>
            <person name="Ono T."/>
            <person name="Yamada K."/>
            <person name="Fujii Y."/>
            <person name="Ozaki K."/>
            <person name="Hirao M."/>
            <person name="Ohmori Y."/>
            <person name="Kawabata A."/>
            <person name="Hikiji T."/>
            <person name="Kobatake N."/>
            <person name="Inagaki H."/>
            <person name="Ikema Y."/>
            <person name="Okamoto S."/>
            <person name="Okitani R."/>
            <person name="Kawakami T."/>
            <person name="Noguchi S."/>
            <person name="Itoh T."/>
            <person name="Shigeta K."/>
            <person name="Senba T."/>
            <person name="Matsumura K."/>
            <person name="Nakajima Y."/>
            <person name="Mizuno T."/>
            <person name="Morinaga M."/>
            <person name="Sasaki M."/>
            <person name="Togashi T."/>
            <person name="Oyama M."/>
            <person name="Hata H."/>
            <person name="Watanabe M."/>
            <person name="Komatsu T."/>
            <person name="Mizushima-Sugano J."/>
            <person name="Satoh T."/>
            <person name="Shirai Y."/>
            <person name="Takahashi Y."/>
            <person name="Nakagawa K."/>
            <person name="Okumura K."/>
            <person name="Nagase T."/>
            <person name="Nomura N."/>
            <person name="Kikuchi H."/>
            <person name="Masuho Y."/>
            <person name="Yamashita R."/>
            <person name="Nakai K."/>
            <person name="Yada T."/>
            <person name="Nakamura Y."/>
            <person name="Ohara O."/>
            <person name="Isogai T."/>
            <person name="Sugano S."/>
        </authorList>
    </citation>
    <scope>NUCLEOTIDE SEQUENCE [LARGE SCALE MRNA] (ISOFORM 1)</scope>
    <source>
        <tissue>Stomach</tissue>
    </source>
</reference>
<reference key="2">
    <citation type="journal article" date="1999" name="Genomics">
        <title>Genome duplications and other features in 12 Mb of DNA sequence from human chromosome 16p and 16q.</title>
        <authorList>
            <person name="Loftus B.J."/>
            <person name="Kim U.-J."/>
            <person name="Sneddon V.P."/>
            <person name="Kalush F."/>
            <person name="Brandon R."/>
            <person name="Fuhrmann J."/>
            <person name="Mason T."/>
            <person name="Crosby M.L."/>
            <person name="Barnstead M."/>
            <person name="Cronin L."/>
            <person name="Mays A.D."/>
            <person name="Cao Y."/>
            <person name="Xu R.X."/>
            <person name="Kang H.-L."/>
            <person name="Mitchell S."/>
            <person name="Eichler E.E."/>
            <person name="Harris P.C."/>
            <person name="Venter J.C."/>
            <person name="Adams M.D."/>
        </authorList>
    </citation>
    <scope>NUCLEOTIDE SEQUENCE [LARGE SCALE GENOMIC DNA]</scope>
</reference>
<reference key="3">
    <citation type="journal article" date="2004" name="Genome Res.">
        <title>The status, quality, and expansion of the NIH full-length cDNA project: the Mammalian Gene Collection (MGC).</title>
        <authorList>
            <consortium name="The MGC Project Team"/>
        </authorList>
    </citation>
    <scope>NUCLEOTIDE SEQUENCE [LARGE SCALE MRNA] (ISOFORMS 1 AND 2)</scope>
    <source>
        <tissue>Muscle</tissue>
        <tissue>Uterus</tissue>
    </source>
</reference>